<protein>
    <recommendedName>
        <fullName>Histone-binding protein RBBP7</fullName>
    </recommendedName>
    <alternativeName>
        <fullName>Retinoblastoma-binding protein 7</fullName>
        <shortName>RBBP-7</shortName>
    </alternativeName>
</protein>
<comment type="function">
    <text evidence="1">Core histone-binding subunit that may target chromatin remodeling factors, histone acetyltransferases and histone deacetylases to their histone substrates in a manner that is regulated by nucleosomal DNA. Component of several complexes which regulate chromatin metabolism.</text>
</comment>
<comment type="subunit">
    <text evidence="1">Binds directly to helix 1 of the histone fold of histone H4, a region that is not accessible when H4 is in chromatin.</text>
</comment>
<comment type="subcellular location">
    <subcellularLocation>
        <location evidence="1">Nucleus</location>
    </subcellularLocation>
</comment>
<comment type="similarity">
    <text evidence="2">Belongs to the WD repeat RBAP46/RBAP48/MSI1 family.</text>
</comment>
<sequence>MANKEMFEDTVEERVINEEYKIWKKNTPFLYDLVMTHALEWPSLTVQWLPDVTRPEGKDYALHWLVLGTHTSDEQNHLVVARVQVPNDDAQFDASHYDSEKGEFGGFGSVSGKIETEIKINHEGEVNRARYMPQNPCIIATKTPSADVLVFDYTKHPSKPDPSGECSPDLRLRGHQKEGYGLSWNSNLSGHLLSASDDHTVCLWDISAGPKEGKVVDAKAVFTGHSAVVEDVAWHLLHESLFGSVADDQKLMIWDTRSNTTSKPSHSVDAHTAEVNCLSFNPYSEFILATGSADKTVALWDLRNLKLKLHSFESHKDEIFQVHWSPHNETILASSGTDRRLNVWDLSKIGEEQSAEDAEDGPPELLFIHGGHTAKISDFSWNPNEPWVICSVSEDNIMQIWQMAENIYNDEEPDIPASELEAQGS</sequence>
<feature type="chain" id="PRO_0000223248" description="Histone-binding protein RBBP7">
    <location>
        <begin position="1"/>
        <end position="425"/>
    </location>
</feature>
<feature type="repeat" description="WD 1">
    <location>
        <begin position="47"/>
        <end position="122"/>
    </location>
</feature>
<feature type="repeat" description="WD 2">
    <location>
        <begin position="128"/>
        <end position="173"/>
    </location>
</feature>
<feature type="repeat" description="WD 3">
    <location>
        <begin position="181"/>
        <end position="217"/>
    </location>
</feature>
<feature type="repeat" description="WD 4">
    <location>
        <begin position="228"/>
        <end position="269"/>
    </location>
</feature>
<feature type="repeat" description="WD 5">
    <location>
        <begin position="275"/>
        <end position="312"/>
    </location>
</feature>
<feature type="repeat" description="WD 6">
    <location>
        <begin position="318"/>
        <end position="369"/>
    </location>
</feature>
<feature type="repeat" description="WD 7">
    <location>
        <begin position="376"/>
        <end position="403"/>
    </location>
</feature>
<gene>
    <name type="primary">rbbp7</name>
</gene>
<evidence type="ECO:0000250" key="1">
    <source>
        <dbReference type="UniProtKB" id="Q16576"/>
    </source>
</evidence>
<evidence type="ECO:0000305" key="2"/>
<organism>
    <name type="scientific">Xenopus laevis</name>
    <name type="common">African clawed frog</name>
    <dbReference type="NCBI Taxonomy" id="8355"/>
    <lineage>
        <taxon>Eukaryota</taxon>
        <taxon>Metazoa</taxon>
        <taxon>Chordata</taxon>
        <taxon>Craniata</taxon>
        <taxon>Vertebrata</taxon>
        <taxon>Euteleostomi</taxon>
        <taxon>Amphibia</taxon>
        <taxon>Batrachia</taxon>
        <taxon>Anura</taxon>
        <taxon>Pipoidea</taxon>
        <taxon>Pipidae</taxon>
        <taxon>Xenopodinae</taxon>
        <taxon>Xenopus</taxon>
        <taxon>Xenopus</taxon>
    </lineage>
</organism>
<name>RBBP7_XENLA</name>
<reference key="1">
    <citation type="submission" date="2003-01" db="EMBL/GenBank/DDBJ databases">
        <authorList>
            <consortium name="NIH - Xenopus Gene Collection (XGC) project"/>
        </authorList>
    </citation>
    <scope>NUCLEOTIDE SEQUENCE [LARGE SCALE MRNA]</scope>
    <source>
        <tissue>Embryo</tissue>
    </source>
</reference>
<dbReference type="EMBL" id="BC042283">
    <property type="protein sequence ID" value="AAH42283.1"/>
    <property type="molecule type" value="mRNA"/>
</dbReference>
<dbReference type="SMR" id="Q8AVH1"/>
<dbReference type="BioGRID" id="98298">
    <property type="interactions" value="1"/>
</dbReference>
<dbReference type="GeneID" id="108708306"/>
<dbReference type="KEGG" id="xla:108708306"/>
<dbReference type="AGR" id="Xenbase:XB-GENE-487913"/>
<dbReference type="Xenbase" id="XB-GENE-487913">
    <property type="gene designation" value="rbbp7.L"/>
</dbReference>
<dbReference type="OMA" id="KIRAMPA"/>
<dbReference type="OrthoDB" id="427795at2759"/>
<dbReference type="CD-CODE" id="78E86D56">
    <property type="entry name" value="Mitochondrial cloud"/>
</dbReference>
<dbReference type="Proteomes" id="UP000186698">
    <property type="component" value="Chromosome 2L"/>
</dbReference>
<dbReference type="Bgee" id="108708306">
    <property type="expression patterns" value="Expressed in ovary and 19 other cell types or tissues"/>
</dbReference>
<dbReference type="GO" id="GO:0035098">
    <property type="term" value="C:ESC/E(Z) complex"/>
    <property type="evidence" value="ECO:0000250"/>
    <property type="project" value="UniProtKB"/>
</dbReference>
<dbReference type="GO" id="GO:0005634">
    <property type="term" value="C:nucleus"/>
    <property type="evidence" value="ECO:0000250"/>
    <property type="project" value="UniProtKB"/>
</dbReference>
<dbReference type="GO" id="GO:0016581">
    <property type="term" value="C:NuRD complex"/>
    <property type="evidence" value="ECO:0000250"/>
    <property type="project" value="UniProtKB"/>
</dbReference>
<dbReference type="GO" id="GO:0042393">
    <property type="term" value="F:histone binding"/>
    <property type="evidence" value="ECO:0000318"/>
    <property type="project" value="GO_Central"/>
</dbReference>
<dbReference type="GO" id="GO:0006338">
    <property type="term" value="P:chromatin remodeling"/>
    <property type="evidence" value="ECO:0000318"/>
    <property type="project" value="GO_Central"/>
</dbReference>
<dbReference type="GO" id="GO:0006260">
    <property type="term" value="P:DNA replication"/>
    <property type="evidence" value="ECO:0007669"/>
    <property type="project" value="UniProtKB-KW"/>
</dbReference>
<dbReference type="GO" id="GO:0006355">
    <property type="term" value="P:regulation of DNA-templated transcription"/>
    <property type="evidence" value="ECO:0000318"/>
    <property type="project" value="GO_Central"/>
</dbReference>
<dbReference type="FunFam" id="2.130.10.10:FF:000021">
    <property type="entry name" value="histone-binding protein RBBP4 isoform X1"/>
    <property type="match status" value="1"/>
</dbReference>
<dbReference type="Gene3D" id="2.130.10.10">
    <property type="entry name" value="YVTN repeat-like/Quinoprotein amine dehydrogenase"/>
    <property type="match status" value="1"/>
</dbReference>
<dbReference type="InterPro" id="IPR020472">
    <property type="entry name" value="G-protein_beta_WD-40_rep"/>
</dbReference>
<dbReference type="InterPro" id="IPR022052">
    <property type="entry name" value="Histone-bd_RBBP4-like_N"/>
</dbReference>
<dbReference type="InterPro" id="IPR015943">
    <property type="entry name" value="WD40/YVTN_repeat-like_dom_sf"/>
</dbReference>
<dbReference type="InterPro" id="IPR019775">
    <property type="entry name" value="WD40_repeat_CS"/>
</dbReference>
<dbReference type="InterPro" id="IPR036322">
    <property type="entry name" value="WD40_repeat_dom_sf"/>
</dbReference>
<dbReference type="InterPro" id="IPR001680">
    <property type="entry name" value="WD40_rpt"/>
</dbReference>
<dbReference type="InterPro" id="IPR050459">
    <property type="entry name" value="WD_repeat_RBAP46/RBAP48/MSI1"/>
</dbReference>
<dbReference type="PANTHER" id="PTHR22850">
    <property type="entry name" value="WD40 REPEAT FAMILY"/>
    <property type="match status" value="1"/>
</dbReference>
<dbReference type="Pfam" id="PF12265">
    <property type="entry name" value="CAF1C_H4-bd"/>
    <property type="match status" value="1"/>
</dbReference>
<dbReference type="Pfam" id="PF00400">
    <property type="entry name" value="WD40"/>
    <property type="match status" value="5"/>
</dbReference>
<dbReference type="PRINTS" id="PR00320">
    <property type="entry name" value="GPROTEINBRPT"/>
</dbReference>
<dbReference type="SMART" id="SM00320">
    <property type="entry name" value="WD40"/>
    <property type="match status" value="6"/>
</dbReference>
<dbReference type="SUPFAM" id="SSF50978">
    <property type="entry name" value="WD40 repeat-like"/>
    <property type="match status" value="1"/>
</dbReference>
<dbReference type="PROSITE" id="PS00678">
    <property type="entry name" value="WD_REPEATS_1"/>
    <property type="match status" value="3"/>
</dbReference>
<dbReference type="PROSITE" id="PS50082">
    <property type="entry name" value="WD_REPEATS_2"/>
    <property type="match status" value="5"/>
</dbReference>
<dbReference type="PROSITE" id="PS50294">
    <property type="entry name" value="WD_REPEATS_REGION"/>
    <property type="match status" value="1"/>
</dbReference>
<keyword id="KW-0143">Chaperone</keyword>
<keyword id="KW-0156">Chromatin regulator</keyword>
<keyword id="KW-0235">DNA replication</keyword>
<keyword id="KW-0539">Nucleus</keyword>
<keyword id="KW-1185">Reference proteome</keyword>
<keyword id="KW-0677">Repeat</keyword>
<keyword id="KW-0678">Repressor</keyword>
<keyword id="KW-0804">Transcription</keyword>
<keyword id="KW-0805">Transcription regulation</keyword>
<keyword id="KW-0853">WD repeat</keyword>
<proteinExistence type="evidence at transcript level"/>
<accession>Q8AVH1</accession>